<keyword id="KW-1185">Reference proteome</keyword>
<keyword id="KW-0687">Ribonucleoprotein</keyword>
<keyword id="KW-0689">Ribosomal protein</keyword>
<keyword id="KW-0694">RNA-binding</keyword>
<keyword id="KW-0699">rRNA-binding</keyword>
<proteinExistence type="inferred from homology"/>
<protein>
    <recommendedName>
        <fullName evidence="1">Large ribosomal subunit protein uL2</fullName>
    </recommendedName>
    <alternativeName>
        <fullName evidence="3">50S ribosomal protein L2</fullName>
    </alternativeName>
</protein>
<gene>
    <name evidence="1" type="primary">rplB</name>
    <name type="ordered locus">RP656</name>
</gene>
<sequence>MALKNFNPITPSLRELVQVDKTNLWKGRPLKTLTKGMSKTGGRNQQGRITSWHRGGGHKKLYRVIDFKRKKIDISAIVERIEYDPNRTAFIALIKYDDGEYSYILAPQKLSIGDRVISSQAADIKIGNCLPLKSIPIGTTLHNVEMKIGKGGQIARSAGTSVELVGKDSGYAQIKLRSGEFRLVPLDCKATIGSISNPDQKNINLGKAGRNRWLGWRPHVRGVAMNPVDHPHGGGEGKTSGGRHPVTPWGFSTKGKKTRKNKRTSKFIVKKRK</sequence>
<feature type="chain" id="PRO_0000129608" description="Large ribosomal subunit protein uL2">
    <location>
        <begin position="1"/>
        <end position="273"/>
    </location>
</feature>
<feature type="region of interest" description="Disordered" evidence="2">
    <location>
        <begin position="228"/>
        <end position="273"/>
    </location>
</feature>
<feature type="compositionally biased region" description="Basic residues" evidence="2">
    <location>
        <begin position="254"/>
        <end position="273"/>
    </location>
</feature>
<reference key="1">
    <citation type="journal article" date="1998" name="Nature">
        <title>The genome sequence of Rickettsia prowazekii and the origin of mitochondria.</title>
        <authorList>
            <person name="Andersson S.G.E."/>
            <person name="Zomorodipour A."/>
            <person name="Andersson J.O."/>
            <person name="Sicheritz-Ponten T."/>
            <person name="Alsmark U.C.M."/>
            <person name="Podowski R.M."/>
            <person name="Naeslund A.K."/>
            <person name="Eriksson A.-S."/>
            <person name="Winkler H.H."/>
            <person name="Kurland C.G."/>
        </authorList>
    </citation>
    <scope>NUCLEOTIDE SEQUENCE [LARGE SCALE GENOMIC DNA]</scope>
    <source>
        <strain>Madrid E</strain>
    </source>
</reference>
<name>RL2_RICPR</name>
<comment type="function">
    <text evidence="1">One of the primary rRNA binding proteins. Required for association of the 30S and 50S subunits to form the 70S ribosome, for tRNA binding and peptide bond formation. It has been suggested to have peptidyltransferase activity; this is somewhat controversial. Makes several contacts with the 16S rRNA in the 70S ribosome.</text>
</comment>
<comment type="subunit">
    <text evidence="1">Part of the 50S ribosomal subunit. Forms a bridge to the 30S subunit in the 70S ribosome.</text>
</comment>
<comment type="similarity">
    <text evidence="1">Belongs to the universal ribosomal protein uL2 family.</text>
</comment>
<evidence type="ECO:0000255" key="1">
    <source>
        <dbReference type="HAMAP-Rule" id="MF_01320"/>
    </source>
</evidence>
<evidence type="ECO:0000256" key="2">
    <source>
        <dbReference type="SAM" id="MobiDB-lite"/>
    </source>
</evidence>
<evidence type="ECO:0000305" key="3"/>
<dbReference type="EMBL" id="AJ235272">
    <property type="protein sequence ID" value="CAA15096.1"/>
    <property type="molecule type" value="Genomic_DNA"/>
</dbReference>
<dbReference type="PIR" id="F71671">
    <property type="entry name" value="F71671"/>
</dbReference>
<dbReference type="RefSeq" id="NP_221020.1">
    <property type="nucleotide sequence ID" value="NC_000963.1"/>
</dbReference>
<dbReference type="RefSeq" id="WP_004596202.1">
    <property type="nucleotide sequence ID" value="NC_000963.1"/>
</dbReference>
<dbReference type="SMR" id="Q9ZCQ8"/>
<dbReference type="STRING" id="272947.gene:17555733"/>
<dbReference type="EnsemblBacteria" id="CAA15096">
    <property type="protein sequence ID" value="CAA15096"/>
    <property type="gene ID" value="CAA15096"/>
</dbReference>
<dbReference type="GeneID" id="57569781"/>
<dbReference type="KEGG" id="rpr:RP656"/>
<dbReference type="PATRIC" id="fig|272947.5.peg.678"/>
<dbReference type="eggNOG" id="COG0090">
    <property type="taxonomic scope" value="Bacteria"/>
</dbReference>
<dbReference type="HOGENOM" id="CLU_036235_2_1_5"/>
<dbReference type="OrthoDB" id="9778722at2"/>
<dbReference type="Proteomes" id="UP000002480">
    <property type="component" value="Chromosome"/>
</dbReference>
<dbReference type="GO" id="GO:0015934">
    <property type="term" value="C:large ribosomal subunit"/>
    <property type="evidence" value="ECO:0007669"/>
    <property type="project" value="InterPro"/>
</dbReference>
<dbReference type="GO" id="GO:0019843">
    <property type="term" value="F:rRNA binding"/>
    <property type="evidence" value="ECO:0007669"/>
    <property type="project" value="UniProtKB-UniRule"/>
</dbReference>
<dbReference type="GO" id="GO:0003735">
    <property type="term" value="F:structural constituent of ribosome"/>
    <property type="evidence" value="ECO:0007669"/>
    <property type="project" value="InterPro"/>
</dbReference>
<dbReference type="GO" id="GO:0016740">
    <property type="term" value="F:transferase activity"/>
    <property type="evidence" value="ECO:0007669"/>
    <property type="project" value="InterPro"/>
</dbReference>
<dbReference type="GO" id="GO:0006412">
    <property type="term" value="P:translation"/>
    <property type="evidence" value="ECO:0007669"/>
    <property type="project" value="UniProtKB-UniRule"/>
</dbReference>
<dbReference type="FunFam" id="2.30.30.30:FF:000001">
    <property type="entry name" value="50S ribosomal protein L2"/>
    <property type="match status" value="1"/>
</dbReference>
<dbReference type="FunFam" id="2.40.50.140:FF:000003">
    <property type="entry name" value="50S ribosomal protein L2"/>
    <property type="match status" value="1"/>
</dbReference>
<dbReference type="FunFam" id="4.10.950.10:FF:000001">
    <property type="entry name" value="50S ribosomal protein L2"/>
    <property type="match status" value="1"/>
</dbReference>
<dbReference type="Gene3D" id="2.30.30.30">
    <property type="match status" value="1"/>
</dbReference>
<dbReference type="Gene3D" id="2.40.50.140">
    <property type="entry name" value="Nucleic acid-binding proteins"/>
    <property type="match status" value="1"/>
</dbReference>
<dbReference type="Gene3D" id="4.10.950.10">
    <property type="entry name" value="Ribosomal protein L2, domain 3"/>
    <property type="match status" value="1"/>
</dbReference>
<dbReference type="HAMAP" id="MF_01320_B">
    <property type="entry name" value="Ribosomal_uL2_B"/>
    <property type="match status" value="1"/>
</dbReference>
<dbReference type="InterPro" id="IPR012340">
    <property type="entry name" value="NA-bd_OB-fold"/>
</dbReference>
<dbReference type="InterPro" id="IPR014722">
    <property type="entry name" value="Rib_uL2_dom2"/>
</dbReference>
<dbReference type="InterPro" id="IPR002171">
    <property type="entry name" value="Ribosomal_uL2"/>
</dbReference>
<dbReference type="InterPro" id="IPR005880">
    <property type="entry name" value="Ribosomal_uL2_bac/org-type"/>
</dbReference>
<dbReference type="InterPro" id="IPR022669">
    <property type="entry name" value="Ribosomal_uL2_C"/>
</dbReference>
<dbReference type="InterPro" id="IPR022671">
    <property type="entry name" value="Ribosomal_uL2_CS"/>
</dbReference>
<dbReference type="InterPro" id="IPR014726">
    <property type="entry name" value="Ribosomal_uL2_dom3"/>
</dbReference>
<dbReference type="InterPro" id="IPR022666">
    <property type="entry name" value="Ribosomal_uL2_RNA-bd_dom"/>
</dbReference>
<dbReference type="InterPro" id="IPR008991">
    <property type="entry name" value="Translation_prot_SH3-like_sf"/>
</dbReference>
<dbReference type="NCBIfam" id="TIGR01171">
    <property type="entry name" value="rplB_bact"/>
    <property type="match status" value="1"/>
</dbReference>
<dbReference type="PANTHER" id="PTHR13691:SF5">
    <property type="entry name" value="LARGE RIBOSOMAL SUBUNIT PROTEIN UL2M"/>
    <property type="match status" value="1"/>
</dbReference>
<dbReference type="PANTHER" id="PTHR13691">
    <property type="entry name" value="RIBOSOMAL PROTEIN L2"/>
    <property type="match status" value="1"/>
</dbReference>
<dbReference type="Pfam" id="PF00181">
    <property type="entry name" value="Ribosomal_L2"/>
    <property type="match status" value="1"/>
</dbReference>
<dbReference type="Pfam" id="PF03947">
    <property type="entry name" value="Ribosomal_L2_C"/>
    <property type="match status" value="1"/>
</dbReference>
<dbReference type="PIRSF" id="PIRSF002158">
    <property type="entry name" value="Ribosomal_L2"/>
    <property type="match status" value="1"/>
</dbReference>
<dbReference type="SMART" id="SM01383">
    <property type="entry name" value="Ribosomal_L2"/>
    <property type="match status" value="1"/>
</dbReference>
<dbReference type="SMART" id="SM01382">
    <property type="entry name" value="Ribosomal_L2_C"/>
    <property type="match status" value="1"/>
</dbReference>
<dbReference type="SUPFAM" id="SSF50249">
    <property type="entry name" value="Nucleic acid-binding proteins"/>
    <property type="match status" value="1"/>
</dbReference>
<dbReference type="SUPFAM" id="SSF50104">
    <property type="entry name" value="Translation proteins SH3-like domain"/>
    <property type="match status" value="1"/>
</dbReference>
<dbReference type="PROSITE" id="PS00467">
    <property type="entry name" value="RIBOSOMAL_L2"/>
    <property type="match status" value="1"/>
</dbReference>
<organism>
    <name type="scientific">Rickettsia prowazekii (strain Madrid E)</name>
    <dbReference type="NCBI Taxonomy" id="272947"/>
    <lineage>
        <taxon>Bacteria</taxon>
        <taxon>Pseudomonadati</taxon>
        <taxon>Pseudomonadota</taxon>
        <taxon>Alphaproteobacteria</taxon>
        <taxon>Rickettsiales</taxon>
        <taxon>Rickettsiaceae</taxon>
        <taxon>Rickettsieae</taxon>
        <taxon>Rickettsia</taxon>
        <taxon>typhus group</taxon>
    </lineage>
</organism>
<accession>Q9ZCQ8</accession>